<evidence type="ECO:0000250" key="1">
    <source>
        <dbReference type="UniProtKB" id="Q5SVD0"/>
    </source>
</evidence>
<evidence type="ECO:0000256" key="2">
    <source>
        <dbReference type="SAM" id="MobiDB-lite"/>
    </source>
</evidence>
<evidence type="ECO:0000305" key="3"/>
<evidence type="ECO:0000312" key="4">
    <source>
        <dbReference type="HGNC" id="HGNC:28705"/>
    </source>
</evidence>
<evidence type="ECO:0007744" key="5">
    <source>
    </source>
</evidence>
<proteinExistence type="evidence at protein level"/>
<dbReference type="EMBL" id="BC031341">
    <property type="protein sequence ID" value="AAH31341.1"/>
    <property type="molecule type" value="mRNA"/>
</dbReference>
<dbReference type="RefSeq" id="NP_874364.1">
    <property type="nucleotide sequence ID" value="NM_182705.3"/>
</dbReference>
<dbReference type="BioGRID" id="131787">
    <property type="interactions" value="24"/>
</dbReference>
<dbReference type="FunCoup" id="Q8N5W9">
    <property type="interactions" value="121"/>
</dbReference>
<dbReference type="IntAct" id="Q8N5W9">
    <property type="interactions" value="17"/>
</dbReference>
<dbReference type="MINT" id="Q8N5W9"/>
<dbReference type="STRING" id="9606.ENSP00000331915"/>
<dbReference type="GlyGen" id="Q8N5W9">
    <property type="glycosylation" value="1 site"/>
</dbReference>
<dbReference type="iPTMnet" id="Q8N5W9"/>
<dbReference type="PhosphoSitePlus" id="Q8N5W9"/>
<dbReference type="SwissPalm" id="Q8N5W9"/>
<dbReference type="BioMuta" id="RFLNB"/>
<dbReference type="jPOST" id="Q8N5W9"/>
<dbReference type="MassIVE" id="Q8N5W9"/>
<dbReference type="PaxDb" id="9606-ENSP00000331915"/>
<dbReference type="PeptideAtlas" id="Q8N5W9"/>
<dbReference type="ProteomicsDB" id="72104"/>
<dbReference type="Pumba" id="Q8N5W9"/>
<dbReference type="Antibodypedia" id="65394">
    <property type="antibodies" value="24 antibodies from 12 providers"/>
</dbReference>
<dbReference type="DNASU" id="359845"/>
<dbReference type="Ensembl" id="ENST00000329099.4">
    <property type="protein sequence ID" value="ENSP00000331915.4"/>
    <property type="gene ID" value="ENSG00000183688.4"/>
</dbReference>
<dbReference type="Ensembl" id="ENST00000640199.4">
    <property type="protein sequence ID" value="ENSP00000491376.2"/>
    <property type="gene ID" value="ENSG00000283979.4"/>
</dbReference>
<dbReference type="GeneID" id="359845"/>
<dbReference type="KEGG" id="hsa:359845"/>
<dbReference type="MANE-Select" id="ENST00000640199.4">
    <property type="protein sequence ID" value="ENSP00000491376.2"/>
    <property type="RefSeq nucleotide sequence ID" value="NM_182705.3"/>
    <property type="RefSeq protein sequence ID" value="NP_874364.1"/>
</dbReference>
<dbReference type="UCSC" id="uc002frj.4">
    <property type="organism name" value="human"/>
</dbReference>
<dbReference type="AGR" id="HGNC:28705"/>
<dbReference type="CTD" id="359845"/>
<dbReference type="DisGeNET" id="359845"/>
<dbReference type="GeneCards" id="RFLNB"/>
<dbReference type="HGNC" id="HGNC:28705">
    <property type="gene designation" value="RFLNB"/>
</dbReference>
<dbReference type="HPA" id="ENSG00000183688">
    <property type="expression patterns" value="Tissue enriched (bone)"/>
</dbReference>
<dbReference type="MIM" id="615928">
    <property type="type" value="gene"/>
</dbReference>
<dbReference type="neXtProt" id="NX_Q8N5W9"/>
<dbReference type="PharmGKB" id="PA143485463"/>
<dbReference type="VEuPathDB" id="HostDB:ENSG00000183688"/>
<dbReference type="eggNOG" id="ENOG502RXSW">
    <property type="taxonomic scope" value="Eukaryota"/>
</dbReference>
<dbReference type="HOGENOM" id="CLU_107206_1_0_1"/>
<dbReference type="InParanoid" id="Q8N5W9"/>
<dbReference type="OrthoDB" id="9932345at2759"/>
<dbReference type="PAN-GO" id="Q8N5W9">
    <property type="GO annotations" value="6 GO annotations based on evolutionary models"/>
</dbReference>
<dbReference type="PhylomeDB" id="Q8N5W9"/>
<dbReference type="TreeFam" id="TF332387"/>
<dbReference type="PathwayCommons" id="Q8N5W9"/>
<dbReference type="SignaLink" id="Q8N5W9"/>
<dbReference type="BioGRID-ORCS" id="359845">
    <property type="hits" value="7 hits in 203 CRISPR screens"/>
</dbReference>
<dbReference type="ChiTaRS" id="RFLNB">
    <property type="organism name" value="human"/>
</dbReference>
<dbReference type="GenomeRNAi" id="359845"/>
<dbReference type="Pharos" id="Q8N5W9">
    <property type="development level" value="Tbio"/>
</dbReference>
<dbReference type="PRO" id="PR:Q8N5W9"/>
<dbReference type="Proteomes" id="UP000005640">
    <property type="component" value="Chromosome 17"/>
</dbReference>
<dbReference type="RNAct" id="Q8N5W9">
    <property type="molecule type" value="protein"/>
</dbReference>
<dbReference type="Bgee" id="ENSG00000183688">
    <property type="expression patterns" value="Expressed in bone marrow and 104 other cell types or tissues"/>
</dbReference>
<dbReference type="GO" id="GO:0032432">
    <property type="term" value="C:actin filament bundle"/>
    <property type="evidence" value="ECO:0000318"/>
    <property type="project" value="GO_Central"/>
</dbReference>
<dbReference type="GO" id="GO:0005737">
    <property type="term" value="C:cytoplasm"/>
    <property type="evidence" value="ECO:0007669"/>
    <property type="project" value="UniProtKB-KW"/>
</dbReference>
<dbReference type="GO" id="GO:0031005">
    <property type="term" value="F:filamin binding"/>
    <property type="evidence" value="ECO:0000314"/>
    <property type="project" value="MGI"/>
</dbReference>
<dbReference type="GO" id="GO:0061572">
    <property type="term" value="P:actin filament bundle organization"/>
    <property type="evidence" value="ECO:0000318"/>
    <property type="project" value="GO_Central"/>
</dbReference>
<dbReference type="GO" id="GO:0001837">
    <property type="term" value="P:epithelial to mesenchymal transition"/>
    <property type="evidence" value="ECO:0007669"/>
    <property type="project" value="Ensembl"/>
</dbReference>
<dbReference type="GO" id="GO:1900158">
    <property type="term" value="P:negative regulation of bone mineralization involved in bone maturation"/>
    <property type="evidence" value="ECO:0000318"/>
    <property type="project" value="GO_Central"/>
</dbReference>
<dbReference type="GO" id="GO:0061182">
    <property type="term" value="P:negative regulation of chondrocyte development"/>
    <property type="evidence" value="ECO:0000318"/>
    <property type="project" value="GO_Central"/>
</dbReference>
<dbReference type="GO" id="GO:0048705">
    <property type="term" value="P:skeletal system morphogenesis"/>
    <property type="evidence" value="ECO:0000318"/>
    <property type="project" value="GO_Central"/>
</dbReference>
<dbReference type="InterPro" id="IPR028215">
    <property type="entry name" value="Refilin"/>
</dbReference>
<dbReference type="PANTHER" id="PTHR31848">
    <property type="match status" value="1"/>
</dbReference>
<dbReference type="PANTHER" id="PTHR31848:SF2">
    <property type="entry name" value="REFILIN-B"/>
    <property type="match status" value="1"/>
</dbReference>
<dbReference type="Pfam" id="PF15068">
    <property type="entry name" value="FAM101"/>
    <property type="match status" value="1"/>
</dbReference>
<gene>
    <name evidence="4" type="primary">RFLNB</name>
</gene>
<feature type="chain" id="PRO_0000264631" description="Refilin-B">
    <location>
        <begin position="1"/>
        <end position="214"/>
    </location>
</feature>
<feature type="region of interest" description="Disordered" evidence="2">
    <location>
        <begin position="1"/>
        <end position="56"/>
    </location>
</feature>
<feature type="modified residue" description="Phosphoserine" evidence="5">
    <location>
        <position position="6"/>
    </location>
</feature>
<feature type="modified residue" description="Phosphoserine" evidence="1">
    <location>
        <position position="26"/>
    </location>
</feature>
<organism>
    <name type="scientific">Homo sapiens</name>
    <name type="common">Human</name>
    <dbReference type="NCBI Taxonomy" id="9606"/>
    <lineage>
        <taxon>Eukaryota</taxon>
        <taxon>Metazoa</taxon>
        <taxon>Chordata</taxon>
        <taxon>Craniata</taxon>
        <taxon>Vertebrata</taxon>
        <taxon>Euteleostomi</taxon>
        <taxon>Mammalia</taxon>
        <taxon>Eutheria</taxon>
        <taxon>Euarchontoglires</taxon>
        <taxon>Primates</taxon>
        <taxon>Haplorrhini</taxon>
        <taxon>Catarrhini</taxon>
        <taxon>Hominidae</taxon>
        <taxon>Homo</taxon>
    </lineage>
</organism>
<comment type="function">
    <text evidence="1">Involved in the regulation of the perinuclear actin network and nuclear shape through interaction with filamins. Plays an essential role in the formation of cartilaginous skeletal elements.</text>
</comment>
<comment type="subunit">
    <text evidence="1">Interacts with FLNA and FLNB.</text>
</comment>
<comment type="subcellular location">
    <subcellularLocation>
        <location evidence="1">Cytoplasm</location>
        <location evidence="1">Cytoskeleton</location>
    </subcellularLocation>
    <text evidence="1">Colocalizes with FLNA along actin bundle-like structures.</text>
</comment>
<comment type="similarity">
    <text evidence="3">Belongs to the Refilin family.</text>
</comment>
<accession>Q8N5W9</accession>
<reference key="1">
    <citation type="journal article" date="2004" name="Genome Res.">
        <title>The status, quality, and expansion of the NIH full-length cDNA project: the Mammalian Gene Collection (MGC).</title>
        <authorList>
            <consortium name="The MGC Project Team"/>
        </authorList>
    </citation>
    <scope>NUCLEOTIDE SEQUENCE [LARGE SCALE MRNA]</scope>
    <source>
        <tissue>Pancreas</tissue>
    </source>
</reference>
<reference key="2">
    <citation type="journal article" date="2011" name="BMC Syst. Biol.">
        <title>Initial characterization of the human central proteome.</title>
        <authorList>
            <person name="Burkard T.R."/>
            <person name="Planyavsky M."/>
            <person name="Kaupe I."/>
            <person name="Breitwieser F.P."/>
            <person name="Buerckstuemmer T."/>
            <person name="Bennett K.L."/>
            <person name="Superti-Furga G."/>
            <person name="Colinge J."/>
        </authorList>
    </citation>
    <scope>IDENTIFICATION BY MASS SPECTROMETRY [LARGE SCALE ANALYSIS]</scope>
</reference>
<reference key="3">
    <citation type="journal article" date="2011" name="Sci. Signal.">
        <title>System-wide temporal characterization of the proteome and phosphoproteome of human embryonic stem cell differentiation.</title>
        <authorList>
            <person name="Rigbolt K.T."/>
            <person name="Prokhorova T.A."/>
            <person name="Akimov V."/>
            <person name="Henningsen J."/>
            <person name="Johansen P.T."/>
            <person name="Kratchmarova I."/>
            <person name="Kassem M."/>
            <person name="Mann M."/>
            <person name="Olsen J.V."/>
            <person name="Blagoev B."/>
        </authorList>
    </citation>
    <scope>IDENTIFICATION BY MASS SPECTROMETRY [LARGE SCALE ANALYSIS]</scope>
</reference>
<reference key="4">
    <citation type="journal article" date="2013" name="J. Proteome Res.">
        <title>Toward a comprehensive characterization of a human cancer cell phosphoproteome.</title>
        <authorList>
            <person name="Zhou H."/>
            <person name="Di Palma S."/>
            <person name="Preisinger C."/>
            <person name="Peng M."/>
            <person name="Polat A.N."/>
            <person name="Heck A.J."/>
            <person name="Mohammed S."/>
        </authorList>
    </citation>
    <scope>PHOSPHORYLATION [LARGE SCALE ANALYSIS] AT SER-6</scope>
    <scope>IDENTIFICATION BY MASS SPECTROMETRY [LARGE SCALE ANALYSIS]</scope>
    <source>
        <tissue>Erythroleukemia</tissue>
    </source>
</reference>
<reference key="5">
    <citation type="journal article" date="2014" name="J. Proteomics">
        <title>An enzyme assisted RP-RPLC approach for in-depth analysis of human liver phosphoproteome.</title>
        <authorList>
            <person name="Bian Y."/>
            <person name="Song C."/>
            <person name="Cheng K."/>
            <person name="Dong M."/>
            <person name="Wang F."/>
            <person name="Huang J."/>
            <person name="Sun D."/>
            <person name="Wang L."/>
            <person name="Ye M."/>
            <person name="Zou H."/>
        </authorList>
    </citation>
    <scope>IDENTIFICATION BY MASS SPECTROMETRY [LARGE SCALE ANALYSIS]</scope>
    <source>
        <tissue>Liver</tissue>
    </source>
</reference>
<reference key="6">
    <citation type="journal article" date="2015" name="Proteomics">
        <title>N-terminome analysis of the human mitochondrial proteome.</title>
        <authorList>
            <person name="Vaca Jacome A.S."/>
            <person name="Rabilloud T."/>
            <person name="Schaeffer-Reiss C."/>
            <person name="Rompais M."/>
            <person name="Ayoub D."/>
            <person name="Lane L."/>
            <person name="Bairoch A."/>
            <person name="Van Dorsselaer A."/>
            <person name="Carapito C."/>
        </authorList>
    </citation>
    <scope>IDENTIFICATION BY MASS SPECTROMETRY [LARGE SCALE ANALYSIS]</scope>
</reference>
<protein>
    <recommendedName>
        <fullName>Refilin-B</fullName>
    </recommendedName>
    <alternativeName>
        <fullName>Regulator of filamin protein B</fullName>
        <shortName>RefilinB</shortName>
    </alternativeName>
</protein>
<name>RFLB_HUMAN</name>
<sequence>MVGRLSLQDVPELVDAKKKGDGVLDSPDSGLPPSPSPSHWGLAAGGGGGERAAAPGTLEPDAAAATPAAPSPASLPLAPGCALRLCPLSFGEGVEFDPLPPKEVRYTSLVKYDSERHFIDDVQLPLGLAVASCSQTVTCVPNGTWRNYKAEVRFEPRHRPTRFLSTTIVYPKYPKAVYTTTLDYNCRKTLRRFLSSVELEAAELPGSDDLSDEC</sequence>
<keyword id="KW-0963">Cytoplasm</keyword>
<keyword id="KW-0206">Cytoskeleton</keyword>
<keyword id="KW-0597">Phosphoprotein</keyword>
<keyword id="KW-1267">Proteomics identification</keyword>
<keyword id="KW-1185">Reference proteome</keyword>